<dbReference type="EC" id="2.1.1.-"/>
<dbReference type="EMBL" id="AL672159">
    <property type="status" value="NOT_ANNOTATED_CDS"/>
    <property type="molecule type" value="Genomic_DNA"/>
</dbReference>
<dbReference type="CCDS" id="CCDS38699.1">
    <molecule id="E9PZZ1-1"/>
</dbReference>
<dbReference type="RefSeq" id="NP_001074240.1">
    <molecule id="E9PZZ1-1"/>
    <property type="nucleotide sequence ID" value="NM_001080771.1"/>
</dbReference>
<dbReference type="SMR" id="E9PZZ1"/>
<dbReference type="FunCoup" id="E9PZZ1">
    <property type="interactions" value="1108"/>
</dbReference>
<dbReference type="STRING" id="10090.ENSMUSP00000092761"/>
<dbReference type="GlyGen" id="E9PZZ1">
    <property type="glycosylation" value="2 sites"/>
</dbReference>
<dbReference type="PhosphoSitePlus" id="E9PZZ1"/>
<dbReference type="PaxDb" id="10090-ENSMUSP00000092761"/>
<dbReference type="PeptideAtlas" id="E9PZZ1"/>
<dbReference type="ProteomicsDB" id="289399">
    <molecule id="E9PZZ1-1"/>
</dbReference>
<dbReference type="ProteomicsDB" id="289400">
    <molecule id="E9PZZ1-2"/>
</dbReference>
<dbReference type="Antibodypedia" id="7968">
    <property type="antibodies" value="117 antibodies from 17 providers"/>
</dbReference>
<dbReference type="Ensembl" id="ENSMUST00000076206.11">
    <molecule id="E9PZZ1-2"/>
    <property type="protein sequence ID" value="ENSMUSP00000075562.5"/>
    <property type="gene ID" value="ENSMUSG00000040478.15"/>
</dbReference>
<dbReference type="Ensembl" id="ENSMUST00000095141.4">
    <molecule id="E9PZZ1-1"/>
    <property type="protein sequence ID" value="ENSMUSP00000092761.4"/>
    <property type="gene ID" value="ENSMUSG00000040478.15"/>
</dbReference>
<dbReference type="GeneID" id="230025"/>
<dbReference type="KEGG" id="mmu:230025"/>
<dbReference type="UCSC" id="uc008sco.1">
    <molecule id="E9PZZ1-1"/>
    <property type="organism name" value="mouse"/>
</dbReference>
<dbReference type="AGR" id="MGI:2448528"/>
<dbReference type="CTD" id="59336"/>
<dbReference type="MGI" id="MGI:2448528">
    <property type="gene designation" value="Prdm13"/>
</dbReference>
<dbReference type="VEuPathDB" id="HostDB:ENSMUSG00000040478"/>
<dbReference type="eggNOG" id="KOG1721">
    <property type="taxonomic scope" value="Eukaryota"/>
</dbReference>
<dbReference type="GeneTree" id="ENSGT00940000160200"/>
<dbReference type="HOGENOM" id="CLU_441855_0_0_1"/>
<dbReference type="InParanoid" id="E9PZZ1"/>
<dbReference type="OMA" id="REIAMHN"/>
<dbReference type="OrthoDB" id="9998363at2759"/>
<dbReference type="TreeFam" id="TF106398"/>
<dbReference type="BioGRID-ORCS" id="230025">
    <property type="hits" value="2 hits in 81 CRISPR screens"/>
</dbReference>
<dbReference type="ChiTaRS" id="Prdm13">
    <property type="organism name" value="mouse"/>
</dbReference>
<dbReference type="PRO" id="PR:E9PZZ1"/>
<dbReference type="Proteomes" id="UP000000589">
    <property type="component" value="Chromosome 4"/>
</dbReference>
<dbReference type="RNAct" id="E9PZZ1">
    <property type="molecule type" value="protein"/>
</dbReference>
<dbReference type="Bgee" id="ENSMUSG00000040478">
    <property type="expression patterns" value="Expressed in mesodermal cell in embryo and 11 other cell types or tissues"/>
</dbReference>
<dbReference type="GO" id="GO:0005634">
    <property type="term" value="C:nucleus"/>
    <property type="evidence" value="ECO:0000314"/>
    <property type="project" value="MGI"/>
</dbReference>
<dbReference type="GO" id="GO:0003682">
    <property type="term" value="F:chromatin binding"/>
    <property type="evidence" value="ECO:0000314"/>
    <property type="project" value="MGI"/>
</dbReference>
<dbReference type="GO" id="GO:0003677">
    <property type="term" value="F:DNA binding"/>
    <property type="evidence" value="ECO:0007669"/>
    <property type="project" value="UniProtKB-KW"/>
</dbReference>
<dbReference type="GO" id="GO:0042054">
    <property type="term" value="F:histone methyltransferase activity"/>
    <property type="evidence" value="ECO:0000314"/>
    <property type="project" value="MGI"/>
</dbReference>
<dbReference type="GO" id="GO:0061629">
    <property type="term" value="F:RNA polymerase II-specific DNA-binding transcription factor binding"/>
    <property type="evidence" value="ECO:0000314"/>
    <property type="project" value="ARUK-UCL"/>
</dbReference>
<dbReference type="GO" id="GO:0008270">
    <property type="term" value="F:zinc ion binding"/>
    <property type="evidence" value="ECO:0007669"/>
    <property type="project" value="UniProtKB-KW"/>
</dbReference>
<dbReference type="GO" id="GO:0097154">
    <property type="term" value="P:GABAergic neuron differentiation"/>
    <property type="evidence" value="ECO:0000315"/>
    <property type="project" value="UniProtKB"/>
</dbReference>
<dbReference type="GO" id="GO:0021979">
    <property type="term" value="P:hypothalamus cell differentiation"/>
    <property type="evidence" value="ECO:0000315"/>
    <property type="project" value="UniProtKB"/>
</dbReference>
<dbReference type="GO" id="GO:0032259">
    <property type="term" value="P:methylation"/>
    <property type="evidence" value="ECO:0007669"/>
    <property type="project" value="UniProtKB-KW"/>
</dbReference>
<dbReference type="GO" id="GO:0000122">
    <property type="term" value="P:negative regulation of transcription by RNA polymerase II"/>
    <property type="evidence" value="ECO:0000314"/>
    <property type="project" value="MGI"/>
</dbReference>
<dbReference type="GO" id="GO:0022008">
    <property type="term" value="P:neurogenesis"/>
    <property type="evidence" value="ECO:0000314"/>
    <property type="project" value="MGI"/>
</dbReference>
<dbReference type="CDD" id="cd19197">
    <property type="entry name" value="PR-SET_PRDM13"/>
    <property type="match status" value="1"/>
</dbReference>
<dbReference type="FunFam" id="2.170.270.10:FF:000027">
    <property type="entry name" value="PR domain zinc finger protein 13"/>
    <property type="match status" value="1"/>
</dbReference>
<dbReference type="FunFam" id="3.30.160.60:FF:000616">
    <property type="entry name" value="PR domain zinc finger protein 13"/>
    <property type="match status" value="1"/>
</dbReference>
<dbReference type="FunFam" id="3.30.160.60:FF:000743">
    <property type="entry name" value="PR domain zinc finger protein 13"/>
    <property type="match status" value="1"/>
</dbReference>
<dbReference type="Gene3D" id="3.30.160.60">
    <property type="entry name" value="Classic Zinc Finger"/>
    <property type="match status" value="2"/>
</dbReference>
<dbReference type="Gene3D" id="2.170.270.10">
    <property type="entry name" value="SET domain"/>
    <property type="match status" value="1"/>
</dbReference>
<dbReference type="InterPro" id="IPR044407">
    <property type="entry name" value="PRDM13_PR/SET"/>
</dbReference>
<dbReference type="InterPro" id="IPR001214">
    <property type="entry name" value="SET_dom"/>
</dbReference>
<dbReference type="InterPro" id="IPR046341">
    <property type="entry name" value="SET_dom_sf"/>
</dbReference>
<dbReference type="InterPro" id="IPR050331">
    <property type="entry name" value="Zinc_finger"/>
</dbReference>
<dbReference type="InterPro" id="IPR036236">
    <property type="entry name" value="Znf_C2H2_sf"/>
</dbReference>
<dbReference type="InterPro" id="IPR013087">
    <property type="entry name" value="Znf_C2H2_type"/>
</dbReference>
<dbReference type="PANTHER" id="PTHR16515">
    <property type="entry name" value="PR DOMAIN ZINC FINGER PROTEIN"/>
    <property type="match status" value="1"/>
</dbReference>
<dbReference type="PANTHER" id="PTHR16515:SF21">
    <property type="entry name" value="PR DOMAIN ZINC FINGER PROTEIN 13"/>
    <property type="match status" value="1"/>
</dbReference>
<dbReference type="Pfam" id="PF21549">
    <property type="entry name" value="PRDM2_PR"/>
    <property type="match status" value="1"/>
</dbReference>
<dbReference type="Pfam" id="PF00096">
    <property type="entry name" value="zf-C2H2"/>
    <property type="match status" value="4"/>
</dbReference>
<dbReference type="SMART" id="SM00355">
    <property type="entry name" value="ZnF_C2H2"/>
    <property type="match status" value="4"/>
</dbReference>
<dbReference type="SUPFAM" id="SSF57667">
    <property type="entry name" value="beta-beta-alpha zinc fingers"/>
    <property type="match status" value="3"/>
</dbReference>
<dbReference type="SUPFAM" id="SSF82199">
    <property type="entry name" value="SET domain"/>
    <property type="match status" value="1"/>
</dbReference>
<dbReference type="PROSITE" id="PS50280">
    <property type="entry name" value="SET"/>
    <property type="match status" value="1"/>
</dbReference>
<dbReference type="PROSITE" id="PS00028">
    <property type="entry name" value="ZINC_FINGER_C2H2_1"/>
    <property type="match status" value="4"/>
</dbReference>
<dbReference type="PROSITE" id="PS50157">
    <property type="entry name" value="ZINC_FINGER_C2H2_2"/>
    <property type="match status" value="4"/>
</dbReference>
<organism>
    <name type="scientific">Mus musculus</name>
    <name type="common">Mouse</name>
    <dbReference type="NCBI Taxonomy" id="10090"/>
    <lineage>
        <taxon>Eukaryota</taxon>
        <taxon>Metazoa</taxon>
        <taxon>Chordata</taxon>
        <taxon>Craniata</taxon>
        <taxon>Vertebrata</taxon>
        <taxon>Euteleostomi</taxon>
        <taxon>Mammalia</taxon>
        <taxon>Eutheria</taxon>
        <taxon>Euarchontoglires</taxon>
        <taxon>Glires</taxon>
        <taxon>Rodentia</taxon>
        <taxon>Myomorpha</taxon>
        <taxon>Muroidea</taxon>
        <taxon>Muridae</taxon>
        <taxon>Murinae</taxon>
        <taxon>Mus</taxon>
        <taxon>Mus</taxon>
    </lineage>
</organism>
<protein>
    <recommendedName>
        <fullName>PR domain zinc finger protein 13</fullName>
        <ecNumber>2.1.1.-</ecNumber>
    </recommendedName>
    <alternativeName>
        <fullName>PR domain-containing protein 13</fullName>
    </alternativeName>
</protein>
<proteinExistence type="evidence at transcript level"/>
<keyword id="KW-0025">Alternative splicing</keyword>
<keyword id="KW-0238">DNA-binding</keyword>
<keyword id="KW-0479">Metal-binding</keyword>
<keyword id="KW-0489">Methyltransferase</keyword>
<keyword id="KW-0539">Nucleus</keyword>
<keyword id="KW-1185">Reference proteome</keyword>
<keyword id="KW-0677">Repeat</keyword>
<keyword id="KW-0949">S-adenosyl-L-methionine</keyword>
<keyword id="KW-0804">Transcription</keyword>
<keyword id="KW-0805">Transcription regulation</keyword>
<keyword id="KW-0808">Transferase</keyword>
<keyword id="KW-0862">Zinc</keyword>
<keyword id="KW-0863">Zinc-finger</keyword>
<evidence type="ECO:0000250" key="1"/>
<evidence type="ECO:0000255" key="2">
    <source>
        <dbReference type="PROSITE-ProRule" id="PRU00042"/>
    </source>
</evidence>
<evidence type="ECO:0000255" key="3">
    <source>
        <dbReference type="PROSITE-ProRule" id="PRU00190"/>
    </source>
</evidence>
<evidence type="ECO:0000256" key="4">
    <source>
        <dbReference type="SAM" id="MobiDB-lite"/>
    </source>
</evidence>
<evidence type="ECO:0000269" key="5">
    <source>
    </source>
</evidence>
<evidence type="ECO:0000305" key="6"/>
<feature type="chain" id="PRO_0000416115" description="PR domain zinc finger protein 13">
    <location>
        <begin position="1"/>
        <end position="754"/>
    </location>
</feature>
<feature type="domain" description="SET" evidence="3">
    <location>
        <begin position="39"/>
        <end position="160"/>
    </location>
</feature>
<feature type="zinc finger region" description="C2H2-type 1" evidence="2">
    <location>
        <begin position="185"/>
        <end position="207"/>
    </location>
</feature>
<feature type="zinc finger region" description="C2H2-type 2" evidence="2">
    <location>
        <begin position="620"/>
        <end position="642"/>
    </location>
</feature>
<feature type="zinc finger region" description="C2H2-type 3" evidence="2">
    <location>
        <begin position="648"/>
        <end position="670"/>
    </location>
</feature>
<feature type="zinc finger region" description="C2H2-type 4" evidence="2">
    <location>
        <begin position="677"/>
        <end position="700"/>
    </location>
</feature>
<feature type="region of interest" description="Disordered" evidence="4">
    <location>
        <begin position="279"/>
        <end position="304"/>
    </location>
</feature>
<feature type="region of interest" description="Disordered" evidence="4">
    <location>
        <begin position="345"/>
        <end position="404"/>
    </location>
</feature>
<feature type="region of interest" description="Disordered" evidence="4">
    <location>
        <begin position="694"/>
        <end position="754"/>
    </location>
</feature>
<feature type="compositionally biased region" description="Gly residues" evidence="4">
    <location>
        <begin position="355"/>
        <end position="376"/>
    </location>
</feature>
<feature type="compositionally biased region" description="Basic residues" evidence="4">
    <location>
        <begin position="383"/>
        <end position="400"/>
    </location>
</feature>
<feature type="splice variant" id="VSP_042506" description="In isoform 2." evidence="6">
    <location>
        <begin position="1"/>
        <end position="48"/>
    </location>
</feature>
<gene>
    <name type="primary">Prdm13</name>
</gene>
<accession>E9PZZ1</accession>
<accession>B1AV74</accession>
<comment type="function">
    <text evidence="1 5">May be involved in transcriptional regulation. Is required for the differentiation of Kiss1-expressing neurons in the arcuate (Arc) nucleus of the hypothalamus. Is a critical regulator of GABAergic cell fate in the cerebellum, required for normal postnatal cerebellar development (PubMed:34730112).</text>
</comment>
<comment type="subcellular location">
    <subcellularLocation>
        <location evidence="6">Nucleus</location>
    </subcellularLocation>
</comment>
<comment type="alternative products">
    <event type="alternative splicing"/>
    <isoform>
        <id>E9PZZ1-1</id>
        <name>1</name>
        <sequence type="displayed"/>
    </isoform>
    <isoform>
        <id>E9PZZ1-2</id>
        <name>2</name>
        <sequence type="described" ref="VSP_042506"/>
    </isoform>
</comment>
<comment type="tissue specificity">
    <text evidence="5">Expressed in the brain, hypothalamus, and embryonic nose and brain tissues.</text>
</comment>
<comment type="developmental stage">
    <text evidence="5">Expression is observed in the cerebellum at 12.5-14.5 days post coitum (dpc). Transcripts are detected prominently in the ventricular zone of both the cerebellar vermis and hemispheres.</text>
</comment>
<comment type="similarity">
    <text evidence="3">Belongs to the class V-like SAM-binding methyltransferase superfamily.</text>
</comment>
<name>PRD13_MOUSE</name>
<reference key="1">
    <citation type="journal article" date="2009" name="PLoS Biol.">
        <title>Lineage-specific biology revealed by a finished genome assembly of the mouse.</title>
        <authorList>
            <person name="Church D.M."/>
            <person name="Goodstadt L."/>
            <person name="Hillier L.W."/>
            <person name="Zody M.C."/>
            <person name="Goldstein S."/>
            <person name="She X."/>
            <person name="Bult C.J."/>
            <person name="Agarwala R."/>
            <person name="Cherry J.L."/>
            <person name="DiCuccio M."/>
            <person name="Hlavina W."/>
            <person name="Kapustin Y."/>
            <person name="Meric P."/>
            <person name="Maglott D."/>
            <person name="Birtle Z."/>
            <person name="Marques A.C."/>
            <person name="Graves T."/>
            <person name="Zhou S."/>
            <person name="Teague B."/>
            <person name="Potamousis K."/>
            <person name="Churas C."/>
            <person name="Place M."/>
            <person name="Herschleb J."/>
            <person name="Runnheim R."/>
            <person name="Forrest D."/>
            <person name="Amos-Landgraf J."/>
            <person name="Schwartz D.C."/>
            <person name="Cheng Z."/>
            <person name="Lindblad-Toh K."/>
            <person name="Eichler E.E."/>
            <person name="Ponting C.P."/>
        </authorList>
    </citation>
    <scope>NUCLEOTIDE SEQUENCE [LARGE SCALE GENOMIC DNA]</scope>
    <source>
        <strain>C57BL/6J</strain>
    </source>
</reference>
<reference key="2">
    <citation type="journal article" date="2021" name="J. Clin. Invest.">
        <title>A recessive PRDM13 mutation results in congenital hypogonadotropic hypogonadism and cerebellar hypoplasia.</title>
        <authorList>
            <consortium name="GOSgene"/>
            <person name="Whittaker D.E."/>
            <person name="Oleari R."/>
            <person name="Gregory L.C."/>
            <person name="Le Quesne-Stabej P."/>
            <person name="Williams H.J."/>
            <person name="Torpiano J.G."/>
            <person name="Formosa N."/>
            <person name="Cachia M.J."/>
            <person name="Field D."/>
            <person name="Lettieri A."/>
            <person name="Ocaka L.A."/>
            <person name="Paganoni A.J."/>
            <person name="Rajabali S.H."/>
            <person name="Riegman K.L."/>
            <person name="De Martini L.B."/>
            <person name="Chaya T."/>
            <person name="Robinson I.C."/>
            <person name="Furukawa T."/>
            <person name="Cariboni A."/>
            <person name="Basson M.A."/>
            <person name="Dattani M.T."/>
        </authorList>
    </citation>
    <scope>FUNCTION</scope>
    <scope>TISSUE SPECIFICITY</scope>
    <scope>DEVELOPMENTAL STAGE</scope>
</reference>
<sequence>MPAHVTPRTEDARRGAGPSSACGCSWFCHLRPVEDPASPSVCLAAVATMHGTSRTSATSVNADCCIPAGLRLGPVPGTFKLGKYLSDRREPGPKKKVRMVRGELVDESGGSPLEWIGLIRAARNPQEQTLEAIADLPGGQIFYRALRDVQPGEELTVWYSNSLAQWFDIPTTATPTHDEKGEERYICWYCWRTFRYPNSLKAHLRFHCVLSGGGGRAFLPQEHAARPGASPVAEGLGLPPKPTVPDLTAPVQAIALRPQAPAAQLAQACGARESIKREASLAPLATSPPPGKWGTPKKGKEQPDRAHSQFLGIVGGSSGGGGGLPFYPGVRSAFKPAGLARAAAQSDPYREEGGGKGPGLALGRLLGGGRAGGRPGSGESPAGHHHHHHHAHHHHHHHPKCLLAGEPPPAGLPCPGALRAFPLLAGHPEEASAFKHVERAPPAAATTSLPSARYAALPAPGLPVERCALQPLDGGSLKAYPGGGGGGECSPLPAVMPAFTVYSGDLLYGPPAAYYPLKLHLGGLLKYPESISYLSGPAAAAAAAAAAAAAAAAIGPAELGSLASIDREIAMHTQQLSEMAAGKSRARLDSGTLPPAVVAATGPGGGGGGGSAAGKPKTGHLCLYCGKLYSRKYGLKIHMRTHTGYKPLKCKVCLRPFGDPSNLNKHIRLHAEGNTPYRCEFCGKVLVRRRDLERHVKSRHPGQSLMAKAGDGPGPEPSYALEPGDPKSEDSDVDVCFTDDQSDPEAGGRGEHDS</sequence>